<feature type="chain" id="PRO_0000412863" description="Sec-independent protein translocase protein TatC">
    <location>
        <begin position="1"/>
        <end position="270"/>
    </location>
</feature>
<feature type="transmembrane region" description="Helical" evidence="1">
    <location>
        <begin position="35"/>
        <end position="55"/>
    </location>
</feature>
<feature type="transmembrane region" description="Helical" evidence="1">
    <location>
        <begin position="93"/>
        <end position="113"/>
    </location>
</feature>
<feature type="transmembrane region" description="Helical" evidence="1">
    <location>
        <begin position="124"/>
        <end position="144"/>
    </location>
</feature>
<feature type="transmembrane region" description="Helical" evidence="1">
    <location>
        <begin position="176"/>
        <end position="196"/>
    </location>
</feature>
<feature type="transmembrane region" description="Helical" evidence="1">
    <location>
        <begin position="209"/>
        <end position="229"/>
    </location>
</feature>
<feature type="transmembrane region" description="Helical" evidence="1">
    <location>
        <begin position="231"/>
        <end position="251"/>
    </location>
</feature>
<keyword id="KW-1003">Cell membrane</keyword>
<keyword id="KW-0472">Membrane</keyword>
<keyword id="KW-0653">Protein transport</keyword>
<keyword id="KW-1185">Reference proteome</keyword>
<keyword id="KW-0811">Translocation</keyword>
<keyword id="KW-0812">Transmembrane</keyword>
<keyword id="KW-1133">Transmembrane helix</keyword>
<keyword id="KW-0813">Transport</keyword>
<proteinExistence type="inferred from homology"/>
<evidence type="ECO:0000255" key="1">
    <source>
        <dbReference type="HAMAP-Rule" id="MF_00902"/>
    </source>
</evidence>
<sequence length="270" mass="29909">MTQLPPPEQTVLKPAPPELASAPLFDHLEELRRRLILSVVFLAVGMVIAFTYRVQLIELVKVPLTYSELYTTGKVQLVTTKLASQLLLSFNLAFWAGLTLALPFIVWQIWAFIAPGLYPQERRWGLPFILGAGFAFAAGVVFGYKLVLPTMVPFLIEFLAGTVTQMQDLQEYIGTVVTFLVAFGVAFELPILAVILTRLGIVNHTMLRQGWRFALIGIMILAAVITPTPDPANMALVAVPLYALYELGVVLSRVFRVIAPEEQERPAPMS</sequence>
<organism>
    <name type="scientific">Deinococcus radiodurans (strain ATCC 13939 / DSM 20539 / JCM 16871 / CCUG 27074 / LMG 4051 / NBRC 15346 / NCIMB 9279 / VKM B-1422 / R1)</name>
    <dbReference type="NCBI Taxonomy" id="243230"/>
    <lineage>
        <taxon>Bacteria</taxon>
        <taxon>Thermotogati</taxon>
        <taxon>Deinococcota</taxon>
        <taxon>Deinococci</taxon>
        <taxon>Deinococcales</taxon>
        <taxon>Deinococcaceae</taxon>
        <taxon>Deinococcus</taxon>
    </lineage>
</organism>
<name>TATC_DEIRA</name>
<gene>
    <name evidence="1" type="primary">tatC</name>
    <name type="ordered locus">DR_0806</name>
</gene>
<dbReference type="EMBL" id="AE000513">
    <property type="protein sequence ID" value="AAF10384.1"/>
    <property type="molecule type" value="Genomic_DNA"/>
</dbReference>
<dbReference type="PIR" id="C75473">
    <property type="entry name" value="C75473"/>
</dbReference>
<dbReference type="RefSeq" id="NP_294530.1">
    <property type="nucleotide sequence ID" value="NC_001263.1"/>
</dbReference>
<dbReference type="RefSeq" id="WP_010887452.1">
    <property type="nucleotide sequence ID" value="NC_001263.1"/>
</dbReference>
<dbReference type="SMR" id="Q9RW63"/>
<dbReference type="FunCoup" id="Q9RW63">
    <property type="interactions" value="427"/>
</dbReference>
<dbReference type="STRING" id="243230.DR_0806"/>
<dbReference type="PaxDb" id="243230-DR_0806"/>
<dbReference type="EnsemblBacteria" id="AAF10384">
    <property type="protein sequence ID" value="AAF10384"/>
    <property type="gene ID" value="DR_0806"/>
</dbReference>
<dbReference type="GeneID" id="69517050"/>
<dbReference type="KEGG" id="dra:DR_0806"/>
<dbReference type="PATRIC" id="fig|243230.17.peg.986"/>
<dbReference type="eggNOG" id="COG0805">
    <property type="taxonomic scope" value="Bacteria"/>
</dbReference>
<dbReference type="HOGENOM" id="CLU_031942_3_0_0"/>
<dbReference type="InParanoid" id="Q9RW63"/>
<dbReference type="OrthoDB" id="9777044at2"/>
<dbReference type="Proteomes" id="UP000002524">
    <property type="component" value="Chromosome 1"/>
</dbReference>
<dbReference type="GO" id="GO:0033281">
    <property type="term" value="C:TAT protein transport complex"/>
    <property type="evidence" value="ECO:0000318"/>
    <property type="project" value="GO_Central"/>
</dbReference>
<dbReference type="GO" id="GO:0009977">
    <property type="term" value="F:proton motive force dependent protein transmembrane transporter activity"/>
    <property type="evidence" value="ECO:0000318"/>
    <property type="project" value="GO_Central"/>
</dbReference>
<dbReference type="GO" id="GO:0065002">
    <property type="term" value="P:intracellular protein transmembrane transport"/>
    <property type="evidence" value="ECO:0000318"/>
    <property type="project" value="GO_Central"/>
</dbReference>
<dbReference type="GO" id="GO:0043953">
    <property type="term" value="P:protein transport by the Tat complex"/>
    <property type="evidence" value="ECO:0000318"/>
    <property type="project" value="GO_Central"/>
</dbReference>
<dbReference type="HAMAP" id="MF_00902">
    <property type="entry name" value="TatC"/>
    <property type="match status" value="1"/>
</dbReference>
<dbReference type="InterPro" id="IPR002033">
    <property type="entry name" value="TatC"/>
</dbReference>
<dbReference type="NCBIfam" id="TIGR00945">
    <property type="entry name" value="tatC"/>
    <property type="match status" value="1"/>
</dbReference>
<dbReference type="PANTHER" id="PTHR30371">
    <property type="entry name" value="SEC-INDEPENDENT PROTEIN TRANSLOCASE PROTEIN TATC"/>
    <property type="match status" value="1"/>
</dbReference>
<dbReference type="PANTHER" id="PTHR30371:SF0">
    <property type="entry name" value="SEC-INDEPENDENT PROTEIN TRANSLOCASE PROTEIN TATC, CHLOROPLASTIC-RELATED"/>
    <property type="match status" value="1"/>
</dbReference>
<dbReference type="Pfam" id="PF00902">
    <property type="entry name" value="TatC"/>
    <property type="match status" value="1"/>
</dbReference>
<dbReference type="PRINTS" id="PR01840">
    <property type="entry name" value="TATCFAMILY"/>
</dbReference>
<accession>Q9RW63</accession>
<protein>
    <recommendedName>
        <fullName evidence="1">Sec-independent protein translocase protein TatC</fullName>
    </recommendedName>
</protein>
<reference key="1">
    <citation type="journal article" date="1999" name="Science">
        <title>Genome sequence of the radioresistant bacterium Deinococcus radiodurans R1.</title>
        <authorList>
            <person name="White O."/>
            <person name="Eisen J.A."/>
            <person name="Heidelberg J.F."/>
            <person name="Hickey E.K."/>
            <person name="Peterson J.D."/>
            <person name="Dodson R.J."/>
            <person name="Haft D.H."/>
            <person name="Gwinn M.L."/>
            <person name="Nelson W.C."/>
            <person name="Richardson D.L."/>
            <person name="Moffat K.S."/>
            <person name="Qin H."/>
            <person name="Jiang L."/>
            <person name="Pamphile W."/>
            <person name="Crosby M."/>
            <person name="Shen M."/>
            <person name="Vamathevan J.J."/>
            <person name="Lam P."/>
            <person name="McDonald L.A."/>
            <person name="Utterback T.R."/>
            <person name="Zalewski C."/>
            <person name="Makarova K.S."/>
            <person name="Aravind L."/>
            <person name="Daly M.J."/>
            <person name="Minton K.W."/>
            <person name="Fleischmann R.D."/>
            <person name="Ketchum K.A."/>
            <person name="Nelson K.E."/>
            <person name="Salzberg S.L."/>
            <person name="Smith H.O."/>
            <person name="Venter J.C."/>
            <person name="Fraser C.M."/>
        </authorList>
    </citation>
    <scope>NUCLEOTIDE SEQUENCE [LARGE SCALE GENOMIC DNA]</scope>
    <source>
        <strain>ATCC 13939 / DSM 20539 / JCM 16871 / CCUG 27074 / LMG 4051 / NBRC 15346 / NCIMB 9279 / VKM B-1422 / R1</strain>
    </source>
</reference>
<comment type="function">
    <text evidence="1">Part of the twin-arginine translocation (Tat) system that transports large folded proteins containing a characteristic twin-arginine motif in their signal peptide across membranes.</text>
</comment>
<comment type="subunit">
    <text evidence="1">Forms a complex with TatA.</text>
</comment>
<comment type="subcellular location">
    <subcellularLocation>
        <location evidence="1">Cell membrane</location>
        <topology evidence="1">Multi-pass membrane protein</topology>
    </subcellularLocation>
</comment>
<comment type="similarity">
    <text evidence="1">Belongs to the TatC family.</text>
</comment>